<name>VES_CITK8</name>
<accession>A8AHD3</accession>
<reference key="1">
    <citation type="submission" date="2007-08" db="EMBL/GenBank/DDBJ databases">
        <authorList>
            <consortium name="The Citrobacter koseri Genome Sequencing Project"/>
            <person name="McClelland M."/>
            <person name="Sanderson E.K."/>
            <person name="Porwollik S."/>
            <person name="Spieth J."/>
            <person name="Clifton W.S."/>
            <person name="Latreille P."/>
            <person name="Courtney L."/>
            <person name="Wang C."/>
            <person name="Pepin K."/>
            <person name="Bhonagiri V."/>
            <person name="Nash W."/>
            <person name="Johnson M."/>
            <person name="Thiruvilangam P."/>
            <person name="Wilson R."/>
        </authorList>
    </citation>
    <scope>NUCLEOTIDE SEQUENCE [LARGE SCALE GENOMIC DNA]</scope>
    <source>
        <strain>ATCC BAA-895 / CDC 4225-83 / SGSC4696</strain>
    </source>
</reference>
<dbReference type="EMBL" id="CP000822">
    <property type="protein sequence ID" value="ABV12896.1"/>
    <property type="molecule type" value="Genomic_DNA"/>
</dbReference>
<dbReference type="RefSeq" id="WP_012132633.1">
    <property type="nucleotide sequence ID" value="NC_009792.1"/>
</dbReference>
<dbReference type="SMR" id="A8AHD3"/>
<dbReference type="STRING" id="290338.CKO_01767"/>
<dbReference type="GeneID" id="45135790"/>
<dbReference type="KEGG" id="cko:CKO_01767"/>
<dbReference type="HOGENOM" id="CLU_090931_5_0_6"/>
<dbReference type="OrthoDB" id="9800082at2"/>
<dbReference type="Proteomes" id="UP000008148">
    <property type="component" value="Chromosome"/>
</dbReference>
<dbReference type="CDD" id="cd20293">
    <property type="entry name" value="cupin_HutD_N"/>
    <property type="match status" value="1"/>
</dbReference>
<dbReference type="Gene3D" id="2.60.120.10">
    <property type="entry name" value="Jelly Rolls"/>
    <property type="match status" value="1"/>
</dbReference>
<dbReference type="HAMAP" id="MF_01591">
    <property type="entry name" value="Ves"/>
    <property type="match status" value="1"/>
</dbReference>
<dbReference type="InterPro" id="IPR014710">
    <property type="entry name" value="RmlC-like_jellyroll"/>
</dbReference>
<dbReference type="InterPro" id="IPR011051">
    <property type="entry name" value="RmlC_Cupin_sf"/>
</dbReference>
<dbReference type="InterPro" id="IPR010282">
    <property type="entry name" value="Uncharacterised_HutD/Ves"/>
</dbReference>
<dbReference type="InterPro" id="IPR023482">
    <property type="entry name" value="Uncharacterised_Ves"/>
</dbReference>
<dbReference type="NCBIfam" id="NF008488">
    <property type="entry name" value="PRK11396.1"/>
    <property type="match status" value="1"/>
</dbReference>
<dbReference type="PANTHER" id="PTHR37943">
    <property type="entry name" value="PROTEIN VES"/>
    <property type="match status" value="1"/>
</dbReference>
<dbReference type="PANTHER" id="PTHR37943:SF1">
    <property type="entry name" value="PROTEIN VES"/>
    <property type="match status" value="1"/>
</dbReference>
<dbReference type="Pfam" id="PF05962">
    <property type="entry name" value="HutD"/>
    <property type="match status" value="1"/>
</dbReference>
<dbReference type="SUPFAM" id="SSF51182">
    <property type="entry name" value="RmlC-like cupins"/>
    <property type="match status" value="1"/>
</dbReference>
<gene>
    <name evidence="1" type="primary">ves</name>
    <name type="ordered locus">CKO_01767</name>
</gene>
<organism>
    <name type="scientific">Citrobacter koseri (strain ATCC BAA-895 / CDC 4225-83 / SGSC4696)</name>
    <dbReference type="NCBI Taxonomy" id="290338"/>
    <lineage>
        <taxon>Bacteria</taxon>
        <taxon>Pseudomonadati</taxon>
        <taxon>Pseudomonadota</taxon>
        <taxon>Gammaproteobacteria</taxon>
        <taxon>Enterobacterales</taxon>
        <taxon>Enterobacteriaceae</taxon>
        <taxon>Citrobacter</taxon>
    </lineage>
</organism>
<protein>
    <recommendedName>
        <fullName evidence="1">Protein Ves</fullName>
    </recommendedName>
</protein>
<evidence type="ECO:0000255" key="1">
    <source>
        <dbReference type="HAMAP-Rule" id="MF_01591"/>
    </source>
</evidence>
<comment type="similarity">
    <text evidence="1">Belongs to the Ves family.</text>
</comment>
<keyword id="KW-1185">Reference proteome</keyword>
<feature type="chain" id="PRO_0000315001" description="Protein Ves">
    <location>
        <begin position="1"/>
        <end position="191"/>
    </location>
</feature>
<proteinExistence type="inferred from homology"/>
<sequence length="191" mass="21353">MEYFDIRKMPVNLWRNGAGETREICCFPPATRDFHWRASIASIAGNGEFSLFPGVERVITLLEGGEVMLEGVNAFTHTLKRHQPFTFAGDSVVKATLSEGQMSMDLNIMTRRDRCKAKVRVADRTFTTFGSRGGVVFVISGAWQLGDKLLTADQGACWHDGKHTLRLLKPEGQLLFSEITWLPGYTPDTVQ</sequence>